<gene>
    <name evidence="1" type="primary">rnhA</name>
    <name type="ordered locus">amb0762</name>
</gene>
<comment type="function">
    <text evidence="1">Endonuclease that specifically degrades the RNA of RNA-DNA hybrids.</text>
</comment>
<comment type="catalytic activity">
    <reaction evidence="1">
        <text>Endonucleolytic cleavage to 5'-phosphomonoester.</text>
        <dbReference type="EC" id="3.1.26.4"/>
    </reaction>
</comment>
<comment type="cofactor">
    <cofactor evidence="1">
        <name>Mg(2+)</name>
        <dbReference type="ChEBI" id="CHEBI:18420"/>
    </cofactor>
    <text evidence="1">Binds 1 Mg(2+) ion per subunit. May bind a second metal ion at a regulatory site, or after substrate binding.</text>
</comment>
<comment type="subunit">
    <text evidence="1">Monomer.</text>
</comment>
<comment type="subcellular location">
    <subcellularLocation>
        <location evidence="1">Cytoplasm</location>
    </subcellularLocation>
</comment>
<comment type="similarity">
    <text evidence="1">Belongs to the RNase H family.</text>
</comment>
<proteinExistence type="inferred from homology"/>
<accession>Q2W9A9</accession>
<keyword id="KW-0963">Cytoplasm</keyword>
<keyword id="KW-0255">Endonuclease</keyword>
<keyword id="KW-0378">Hydrolase</keyword>
<keyword id="KW-0460">Magnesium</keyword>
<keyword id="KW-0479">Metal-binding</keyword>
<keyword id="KW-0540">Nuclease</keyword>
<name>RNH_PARM1</name>
<evidence type="ECO:0000255" key="1">
    <source>
        <dbReference type="HAMAP-Rule" id="MF_00042"/>
    </source>
</evidence>
<evidence type="ECO:0000255" key="2">
    <source>
        <dbReference type="PROSITE-ProRule" id="PRU00408"/>
    </source>
</evidence>
<feature type="chain" id="PRO_0000332622" description="Ribonuclease H">
    <location>
        <begin position="1"/>
        <end position="154"/>
    </location>
</feature>
<feature type="domain" description="RNase H type-1" evidence="2">
    <location>
        <begin position="7"/>
        <end position="148"/>
    </location>
</feature>
<feature type="binding site" evidence="1">
    <location>
        <position position="16"/>
    </location>
    <ligand>
        <name>Mg(2+)</name>
        <dbReference type="ChEBI" id="CHEBI:18420"/>
        <label>1</label>
    </ligand>
</feature>
<feature type="binding site" evidence="1">
    <location>
        <position position="16"/>
    </location>
    <ligand>
        <name>Mg(2+)</name>
        <dbReference type="ChEBI" id="CHEBI:18420"/>
        <label>2</label>
    </ligand>
</feature>
<feature type="binding site" evidence="1">
    <location>
        <position position="54"/>
    </location>
    <ligand>
        <name>Mg(2+)</name>
        <dbReference type="ChEBI" id="CHEBI:18420"/>
        <label>1</label>
    </ligand>
</feature>
<feature type="binding site" evidence="1">
    <location>
        <position position="76"/>
    </location>
    <ligand>
        <name>Mg(2+)</name>
        <dbReference type="ChEBI" id="CHEBI:18420"/>
        <label>1</label>
    </ligand>
</feature>
<feature type="binding site" evidence="1">
    <location>
        <position position="140"/>
    </location>
    <ligand>
        <name>Mg(2+)</name>
        <dbReference type="ChEBI" id="CHEBI:18420"/>
        <label>2</label>
    </ligand>
</feature>
<reference key="1">
    <citation type="journal article" date="2005" name="DNA Res.">
        <title>Complete genome sequence of the facultative anaerobic magnetotactic bacterium Magnetospirillum sp. strain AMB-1.</title>
        <authorList>
            <person name="Matsunaga T."/>
            <person name="Okamura Y."/>
            <person name="Fukuda Y."/>
            <person name="Wahyudi A.T."/>
            <person name="Murase Y."/>
            <person name="Takeyama H."/>
        </authorList>
    </citation>
    <scope>NUCLEOTIDE SEQUENCE [LARGE SCALE GENOMIC DNA]</scope>
    <source>
        <strain>ATCC 700264 / AMB-1</strain>
    </source>
</reference>
<sequence>MSETAPKPETVEIYTDGACSGNPGPGGWGAILRFKGIEKELKGGESPTTNNRMEMMAVLVALNTLTRSCAVDVYTDSEYVKKGMTEWLRGWKARGWKTADKKPVKNDDLWKALDEAAARHKVSWHWVKGHAGHPENERADALAREGIADLRART</sequence>
<protein>
    <recommendedName>
        <fullName evidence="1">Ribonuclease H</fullName>
        <shortName evidence="1">RNase H</shortName>
        <ecNumber evidence="1">3.1.26.4</ecNumber>
    </recommendedName>
</protein>
<dbReference type="EC" id="3.1.26.4" evidence="1"/>
<dbReference type="EMBL" id="AP007255">
    <property type="protein sequence ID" value="BAE49566.1"/>
    <property type="molecule type" value="Genomic_DNA"/>
</dbReference>
<dbReference type="RefSeq" id="WP_011383205.1">
    <property type="nucleotide sequence ID" value="NC_007626.1"/>
</dbReference>
<dbReference type="SMR" id="Q2W9A9"/>
<dbReference type="STRING" id="342108.amb0762"/>
<dbReference type="KEGG" id="mag:amb0762"/>
<dbReference type="HOGENOM" id="CLU_030894_6_0_5"/>
<dbReference type="OrthoDB" id="7845843at2"/>
<dbReference type="Proteomes" id="UP000007058">
    <property type="component" value="Chromosome"/>
</dbReference>
<dbReference type="GO" id="GO:0005737">
    <property type="term" value="C:cytoplasm"/>
    <property type="evidence" value="ECO:0007669"/>
    <property type="project" value="UniProtKB-SubCell"/>
</dbReference>
<dbReference type="GO" id="GO:0000287">
    <property type="term" value="F:magnesium ion binding"/>
    <property type="evidence" value="ECO:0007669"/>
    <property type="project" value="UniProtKB-UniRule"/>
</dbReference>
<dbReference type="GO" id="GO:0003676">
    <property type="term" value="F:nucleic acid binding"/>
    <property type="evidence" value="ECO:0007669"/>
    <property type="project" value="InterPro"/>
</dbReference>
<dbReference type="GO" id="GO:0004523">
    <property type="term" value="F:RNA-DNA hybrid ribonuclease activity"/>
    <property type="evidence" value="ECO:0007669"/>
    <property type="project" value="UniProtKB-UniRule"/>
</dbReference>
<dbReference type="GO" id="GO:0043137">
    <property type="term" value="P:DNA replication, removal of RNA primer"/>
    <property type="evidence" value="ECO:0007669"/>
    <property type="project" value="TreeGrafter"/>
</dbReference>
<dbReference type="CDD" id="cd09278">
    <property type="entry name" value="RNase_HI_prokaryote_like"/>
    <property type="match status" value="1"/>
</dbReference>
<dbReference type="FunFam" id="3.30.420.10:FF:000089">
    <property type="entry name" value="Ribonuclease H"/>
    <property type="match status" value="1"/>
</dbReference>
<dbReference type="Gene3D" id="3.30.420.10">
    <property type="entry name" value="Ribonuclease H-like superfamily/Ribonuclease H"/>
    <property type="match status" value="1"/>
</dbReference>
<dbReference type="HAMAP" id="MF_00042">
    <property type="entry name" value="RNase_H"/>
    <property type="match status" value="1"/>
</dbReference>
<dbReference type="InterPro" id="IPR050092">
    <property type="entry name" value="RNase_H"/>
</dbReference>
<dbReference type="InterPro" id="IPR012337">
    <property type="entry name" value="RNaseH-like_sf"/>
</dbReference>
<dbReference type="InterPro" id="IPR002156">
    <property type="entry name" value="RNaseH_domain"/>
</dbReference>
<dbReference type="InterPro" id="IPR036397">
    <property type="entry name" value="RNaseH_sf"/>
</dbReference>
<dbReference type="InterPro" id="IPR022892">
    <property type="entry name" value="RNaseHI"/>
</dbReference>
<dbReference type="NCBIfam" id="NF001236">
    <property type="entry name" value="PRK00203.1"/>
    <property type="match status" value="1"/>
</dbReference>
<dbReference type="PANTHER" id="PTHR10642">
    <property type="entry name" value="RIBONUCLEASE H1"/>
    <property type="match status" value="1"/>
</dbReference>
<dbReference type="PANTHER" id="PTHR10642:SF26">
    <property type="entry name" value="RIBONUCLEASE H1"/>
    <property type="match status" value="1"/>
</dbReference>
<dbReference type="Pfam" id="PF00075">
    <property type="entry name" value="RNase_H"/>
    <property type="match status" value="1"/>
</dbReference>
<dbReference type="SUPFAM" id="SSF53098">
    <property type="entry name" value="Ribonuclease H-like"/>
    <property type="match status" value="1"/>
</dbReference>
<dbReference type="PROSITE" id="PS50879">
    <property type="entry name" value="RNASE_H_1"/>
    <property type="match status" value="1"/>
</dbReference>
<organism>
    <name type="scientific">Paramagnetospirillum magneticum (strain ATCC 700264 / AMB-1)</name>
    <name type="common">Magnetospirillum magneticum</name>
    <dbReference type="NCBI Taxonomy" id="342108"/>
    <lineage>
        <taxon>Bacteria</taxon>
        <taxon>Pseudomonadati</taxon>
        <taxon>Pseudomonadota</taxon>
        <taxon>Alphaproteobacteria</taxon>
        <taxon>Rhodospirillales</taxon>
        <taxon>Magnetospirillaceae</taxon>
        <taxon>Paramagnetospirillum</taxon>
    </lineage>
</organism>